<reference key="1">
    <citation type="submission" date="2007-11" db="EMBL/GenBank/DDBJ databases">
        <title>Complete sequence of chromosome of Shewanella baltica OS195.</title>
        <authorList>
            <consortium name="US DOE Joint Genome Institute"/>
            <person name="Copeland A."/>
            <person name="Lucas S."/>
            <person name="Lapidus A."/>
            <person name="Barry K."/>
            <person name="Glavina del Rio T."/>
            <person name="Dalin E."/>
            <person name="Tice H."/>
            <person name="Pitluck S."/>
            <person name="Chain P."/>
            <person name="Malfatti S."/>
            <person name="Shin M."/>
            <person name="Vergez L."/>
            <person name="Schmutz J."/>
            <person name="Larimer F."/>
            <person name="Land M."/>
            <person name="Hauser L."/>
            <person name="Kyrpides N."/>
            <person name="Kim E."/>
            <person name="Brettar I."/>
            <person name="Rodrigues J."/>
            <person name="Konstantinidis K."/>
            <person name="Klappenbach J."/>
            <person name="Hofle M."/>
            <person name="Tiedje J."/>
            <person name="Richardson P."/>
        </authorList>
    </citation>
    <scope>NUCLEOTIDE SEQUENCE [LARGE SCALE GENOMIC DNA]</scope>
    <source>
        <strain>OS195</strain>
    </source>
</reference>
<keyword id="KW-0413">Isomerase</keyword>
<keyword id="KW-0819">tRNA processing</keyword>
<dbReference type="EC" id="5.4.99.25" evidence="1"/>
<dbReference type="EMBL" id="CP000891">
    <property type="protein sequence ID" value="ABX50577.1"/>
    <property type="molecule type" value="Genomic_DNA"/>
</dbReference>
<dbReference type="RefSeq" id="WP_006086939.1">
    <property type="nucleotide sequence ID" value="NC_009997.1"/>
</dbReference>
<dbReference type="SMR" id="A9KZW9"/>
<dbReference type="GeneID" id="11773457"/>
<dbReference type="KEGG" id="sbn:Sbal195_3415"/>
<dbReference type="HOGENOM" id="CLU_032087_0_3_6"/>
<dbReference type="Proteomes" id="UP000000770">
    <property type="component" value="Chromosome"/>
</dbReference>
<dbReference type="GO" id="GO:0003723">
    <property type="term" value="F:RNA binding"/>
    <property type="evidence" value="ECO:0007669"/>
    <property type="project" value="InterPro"/>
</dbReference>
<dbReference type="GO" id="GO:0160148">
    <property type="term" value="F:tRNA pseudouridine(55) synthase activity"/>
    <property type="evidence" value="ECO:0007669"/>
    <property type="project" value="UniProtKB-EC"/>
</dbReference>
<dbReference type="GO" id="GO:1990481">
    <property type="term" value="P:mRNA pseudouridine synthesis"/>
    <property type="evidence" value="ECO:0007669"/>
    <property type="project" value="TreeGrafter"/>
</dbReference>
<dbReference type="GO" id="GO:0031119">
    <property type="term" value="P:tRNA pseudouridine synthesis"/>
    <property type="evidence" value="ECO:0007669"/>
    <property type="project" value="UniProtKB-UniRule"/>
</dbReference>
<dbReference type="CDD" id="cd02573">
    <property type="entry name" value="PseudoU_synth_EcTruB"/>
    <property type="match status" value="1"/>
</dbReference>
<dbReference type="CDD" id="cd21152">
    <property type="entry name" value="PUA_TruB_bacterial"/>
    <property type="match status" value="1"/>
</dbReference>
<dbReference type="FunFam" id="3.30.2350.10:FF:000003">
    <property type="entry name" value="tRNA pseudouridine synthase B"/>
    <property type="match status" value="1"/>
</dbReference>
<dbReference type="Gene3D" id="3.30.2350.10">
    <property type="entry name" value="Pseudouridine synthase"/>
    <property type="match status" value="1"/>
</dbReference>
<dbReference type="Gene3D" id="2.30.130.10">
    <property type="entry name" value="PUA domain"/>
    <property type="match status" value="1"/>
</dbReference>
<dbReference type="HAMAP" id="MF_01080">
    <property type="entry name" value="TruB_bact"/>
    <property type="match status" value="1"/>
</dbReference>
<dbReference type="InterPro" id="IPR020103">
    <property type="entry name" value="PsdUridine_synth_cat_dom_sf"/>
</dbReference>
<dbReference type="InterPro" id="IPR002501">
    <property type="entry name" value="PsdUridine_synth_N"/>
</dbReference>
<dbReference type="InterPro" id="IPR015947">
    <property type="entry name" value="PUA-like_sf"/>
</dbReference>
<dbReference type="InterPro" id="IPR036974">
    <property type="entry name" value="PUA_sf"/>
</dbReference>
<dbReference type="InterPro" id="IPR014780">
    <property type="entry name" value="tRNA_psdUridine_synth_TruB"/>
</dbReference>
<dbReference type="InterPro" id="IPR015240">
    <property type="entry name" value="tRNA_sdUridine_synth_fam1_C"/>
</dbReference>
<dbReference type="InterPro" id="IPR032819">
    <property type="entry name" value="TruB_C"/>
</dbReference>
<dbReference type="NCBIfam" id="TIGR00431">
    <property type="entry name" value="TruB"/>
    <property type="match status" value="1"/>
</dbReference>
<dbReference type="PANTHER" id="PTHR13767:SF2">
    <property type="entry name" value="PSEUDOURIDYLATE SYNTHASE TRUB1"/>
    <property type="match status" value="1"/>
</dbReference>
<dbReference type="PANTHER" id="PTHR13767">
    <property type="entry name" value="TRNA-PSEUDOURIDINE SYNTHASE"/>
    <property type="match status" value="1"/>
</dbReference>
<dbReference type="Pfam" id="PF09157">
    <property type="entry name" value="TruB-C_2"/>
    <property type="match status" value="1"/>
</dbReference>
<dbReference type="Pfam" id="PF16198">
    <property type="entry name" value="TruB_C_2"/>
    <property type="match status" value="1"/>
</dbReference>
<dbReference type="Pfam" id="PF01509">
    <property type="entry name" value="TruB_N"/>
    <property type="match status" value="1"/>
</dbReference>
<dbReference type="SUPFAM" id="SSF55120">
    <property type="entry name" value="Pseudouridine synthase"/>
    <property type="match status" value="1"/>
</dbReference>
<dbReference type="SUPFAM" id="SSF88697">
    <property type="entry name" value="PUA domain-like"/>
    <property type="match status" value="1"/>
</dbReference>
<proteinExistence type="inferred from homology"/>
<comment type="function">
    <text evidence="1">Responsible for synthesis of pseudouridine from uracil-55 in the psi GC loop of transfer RNAs.</text>
</comment>
<comment type="catalytic activity">
    <reaction evidence="1">
        <text>uridine(55) in tRNA = pseudouridine(55) in tRNA</text>
        <dbReference type="Rhea" id="RHEA:42532"/>
        <dbReference type="Rhea" id="RHEA-COMP:10101"/>
        <dbReference type="Rhea" id="RHEA-COMP:10102"/>
        <dbReference type="ChEBI" id="CHEBI:65314"/>
        <dbReference type="ChEBI" id="CHEBI:65315"/>
        <dbReference type="EC" id="5.4.99.25"/>
    </reaction>
</comment>
<comment type="similarity">
    <text evidence="1">Belongs to the pseudouridine synthase TruB family. Type 1 subfamily.</text>
</comment>
<organism>
    <name type="scientific">Shewanella baltica (strain OS195)</name>
    <dbReference type="NCBI Taxonomy" id="399599"/>
    <lineage>
        <taxon>Bacteria</taxon>
        <taxon>Pseudomonadati</taxon>
        <taxon>Pseudomonadota</taxon>
        <taxon>Gammaproteobacteria</taxon>
        <taxon>Alteromonadales</taxon>
        <taxon>Shewanellaceae</taxon>
        <taxon>Shewanella</taxon>
    </lineage>
</organism>
<sequence>MARRPKGRFIDGIVLLDKSTGMSSNFALQRVKRFFNANKAGHTGALDPLATGMLPVCLGEGTKFSQHLLDADKRYLVTAKLGERTDTSDSDGEVVQTRAIDFTEAQLLTALDFFRGETQQVPSMYSALKYQGQPLYKYAREGIEVPRESRPITVFELNFIGLEGDELTLDIHCSKGTYIRTIIDDLGEMLGCGAHVIMLRRTQVAQYPYARMVSLEQLEALVAQAHEQQIDPSVLLDPLLLPMDTAVADFPEVNVPDAIAPYLMQGQAVRVPVNADLKTDELVRITLGDIRRFVGIGTMNEDGLLAPKRLIVIHDEPAETD</sequence>
<protein>
    <recommendedName>
        <fullName evidence="1">tRNA pseudouridine synthase B</fullName>
        <ecNumber evidence="1">5.4.99.25</ecNumber>
    </recommendedName>
    <alternativeName>
        <fullName evidence="1">tRNA pseudouridine(55) synthase</fullName>
        <shortName evidence="1">Psi55 synthase</shortName>
    </alternativeName>
    <alternativeName>
        <fullName evidence="1">tRNA pseudouridylate synthase</fullName>
    </alternativeName>
    <alternativeName>
        <fullName evidence="1">tRNA-uridine isomerase</fullName>
    </alternativeName>
</protein>
<evidence type="ECO:0000255" key="1">
    <source>
        <dbReference type="HAMAP-Rule" id="MF_01080"/>
    </source>
</evidence>
<accession>A9KZW9</accession>
<feature type="chain" id="PRO_1000084672" description="tRNA pseudouridine synthase B">
    <location>
        <begin position="1"/>
        <end position="321"/>
    </location>
</feature>
<feature type="active site" description="Nucleophile" evidence="1">
    <location>
        <position position="47"/>
    </location>
</feature>
<gene>
    <name evidence="1" type="primary">truB</name>
    <name type="ordered locus">Sbal195_3415</name>
</gene>
<name>TRUB_SHEB9</name>